<protein>
    <recommendedName>
        <fullName evidence="1">Molybdenum cofactor guanylyltransferase</fullName>
        <shortName evidence="1">MoCo guanylyltransferase</shortName>
        <ecNumber evidence="1">2.7.7.77</ecNumber>
    </recommendedName>
    <alternativeName>
        <fullName evidence="1">GTP:molybdopterin guanylyltransferase</fullName>
    </alternativeName>
    <alternativeName>
        <fullName evidence="1">Mo-MPT guanylyltransferase</fullName>
    </alternativeName>
    <alternativeName>
        <fullName evidence="1">Molybdopterin guanylyltransferase</fullName>
    </alternativeName>
    <alternativeName>
        <fullName evidence="1">Molybdopterin-guanine dinucleotide synthase</fullName>
        <shortName evidence="1">MGD synthase</shortName>
    </alternativeName>
</protein>
<keyword id="KW-0963">Cytoplasm</keyword>
<keyword id="KW-0342">GTP-binding</keyword>
<keyword id="KW-0460">Magnesium</keyword>
<keyword id="KW-0479">Metal-binding</keyword>
<keyword id="KW-0501">Molybdenum cofactor biosynthesis</keyword>
<keyword id="KW-0547">Nucleotide-binding</keyword>
<keyword id="KW-0808">Transferase</keyword>
<name>MOBA_ECTM1</name>
<reference key="1">
    <citation type="submission" date="2007-04" db="EMBL/GenBank/DDBJ databases">
        <title>Complete sequence of Pseudomonas mendocina ymp.</title>
        <authorList>
            <consortium name="US DOE Joint Genome Institute"/>
            <person name="Copeland A."/>
            <person name="Lucas S."/>
            <person name="Lapidus A."/>
            <person name="Barry K."/>
            <person name="Glavina del Rio T."/>
            <person name="Dalin E."/>
            <person name="Tice H."/>
            <person name="Pitluck S."/>
            <person name="Kiss H."/>
            <person name="Brettin T."/>
            <person name="Detter J.C."/>
            <person name="Bruce D."/>
            <person name="Han C."/>
            <person name="Schmutz J."/>
            <person name="Larimer F."/>
            <person name="Land M."/>
            <person name="Hauser L."/>
            <person name="Kyrpides N."/>
            <person name="Mikhailova N."/>
            <person name="Hersman L."/>
            <person name="Dubois J."/>
            <person name="Maurice P."/>
            <person name="Richardson P."/>
        </authorList>
    </citation>
    <scope>NUCLEOTIDE SEQUENCE [LARGE SCALE GENOMIC DNA]</scope>
    <source>
        <strain>ymp</strain>
    </source>
</reference>
<accession>A4XT41</accession>
<sequence>MPVTHASFPCSVLLLCGGRGQRMGGRDKGLLEWRGRPLIAWLHEQVRPLSDDLILSCNRNHERYAHYADQLVTDEDQDFQGPLAGIRAGMAVAHHEQMLVLPCDAPLVDRQLLEALLAHAGARPVVVRQGDYWQPLFCLLPTALKADLEQLWQAGERSPQRWFSRLAPVAVECPIDDPRLANLNTPEMLAAASLSADARES</sequence>
<organism>
    <name type="scientific">Ectopseudomonas mendocina (strain ymp)</name>
    <name type="common">Pseudomonas mendocina</name>
    <dbReference type="NCBI Taxonomy" id="399739"/>
    <lineage>
        <taxon>Bacteria</taxon>
        <taxon>Pseudomonadati</taxon>
        <taxon>Pseudomonadota</taxon>
        <taxon>Gammaproteobacteria</taxon>
        <taxon>Pseudomonadales</taxon>
        <taxon>Pseudomonadaceae</taxon>
        <taxon>Ectopseudomonas</taxon>
    </lineage>
</organism>
<dbReference type="EC" id="2.7.7.77" evidence="1"/>
<dbReference type="EMBL" id="CP000680">
    <property type="protein sequence ID" value="ABP84507.1"/>
    <property type="molecule type" value="Genomic_DNA"/>
</dbReference>
<dbReference type="SMR" id="A4XT41"/>
<dbReference type="STRING" id="399739.Pmen_1743"/>
<dbReference type="KEGG" id="pmy:Pmen_1743"/>
<dbReference type="PATRIC" id="fig|399739.8.peg.1767"/>
<dbReference type="eggNOG" id="COG0746">
    <property type="taxonomic scope" value="Bacteria"/>
</dbReference>
<dbReference type="HOGENOM" id="CLU_055597_5_1_6"/>
<dbReference type="OrthoDB" id="9788394at2"/>
<dbReference type="GO" id="GO:0005737">
    <property type="term" value="C:cytoplasm"/>
    <property type="evidence" value="ECO:0007669"/>
    <property type="project" value="UniProtKB-SubCell"/>
</dbReference>
<dbReference type="GO" id="GO:0005525">
    <property type="term" value="F:GTP binding"/>
    <property type="evidence" value="ECO:0007669"/>
    <property type="project" value="UniProtKB-UniRule"/>
</dbReference>
<dbReference type="GO" id="GO:0046872">
    <property type="term" value="F:metal ion binding"/>
    <property type="evidence" value="ECO:0007669"/>
    <property type="project" value="UniProtKB-KW"/>
</dbReference>
<dbReference type="GO" id="GO:0061603">
    <property type="term" value="F:molybdenum cofactor guanylyltransferase activity"/>
    <property type="evidence" value="ECO:0007669"/>
    <property type="project" value="UniProtKB-EC"/>
</dbReference>
<dbReference type="GO" id="GO:1902758">
    <property type="term" value="P:bis(molybdopterin guanine dinucleotide)molybdenum biosynthetic process"/>
    <property type="evidence" value="ECO:0007669"/>
    <property type="project" value="TreeGrafter"/>
</dbReference>
<dbReference type="CDD" id="cd02503">
    <property type="entry name" value="MobA"/>
    <property type="match status" value="1"/>
</dbReference>
<dbReference type="Gene3D" id="3.90.550.10">
    <property type="entry name" value="Spore Coat Polysaccharide Biosynthesis Protein SpsA, Chain A"/>
    <property type="match status" value="1"/>
</dbReference>
<dbReference type="HAMAP" id="MF_00316">
    <property type="entry name" value="MobA"/>
    <property type="match status" value="1"/>
</dbReference>
<dbReference type="InterPro" id="IPR025877">
    <property type="entry name" value="MobA-like_NTP_Trfase"/>
</dbReference>
<dbReference type="InterPro" id="IPR013482">
    <property type="entry name" value="Molybde_CF_guanTrfase"/>
</dbReference>
<dbReference type="InterPro" id="IPR029044">
    <property type="entry name" value="Nucleotide-diphossugar_trans"/>
</dbReference>
<dbReference type="NCBIfam" id="TIGR02665">
    <property type="entry name" value="molyb_mobA"/>
    <property type="match status" value="1"/>
</dbReference>
<dbReference type="PANTHER" id="PTHR19136">
    <property type="entry name" value="MOLYBDENUM COFACTOR GUANYLYLTRANSFERASE"/>
    <property type="match status" value="1"/>
</dbReference>
<dbReference type="PANTHER" id="PTHR19136:SF81">
    <property type="entry name" value="MOLYBDENUM COFACTOR GUANYLYLTRANSFERASE"/>
    <property type="match status" value="1"/>
</dbReference>
<dbReference type="Pfam" id="PF12804">
    <property type="entry name" value="NTP_transf_3"/>
    <property type="match status" value="1"/>
</dbReference>
<dbReference type="SUPFAM" id="SSF53448">
    <property type="entry name" value="Nucleotide-diphospho-sugar transferases"/>
    <property type="match status" value="1"/>
</dbReference>
<gene>
    <name evidence="1" type="primary">mobA</name>
    <name type="ordered locus">Pmen_1743</name>
</gene>
<evidence type="ECO:0000255" key="1">
    <source>
        <dbReference type="HAMAP-Rule" id="MF_00316"/>
    </source>
</evidence>
<comment type="function">
    <text evidence="1">Transfers a GMP moiety from GTP to Mo-molybdopterin (Mo-MPT) cofactor (Moco or molybdenum cofactor) to form Mo-molybdopterin guanine dinucleotide (Mo-MGD) cofactor.</text>
</comment>
<comment type="catalytic activity">
    <reaction evidence="1">
        <text>Mo-molybdopterin + GTP + H(+) = Mo-molybdopterin guanine dinucleotide + diphosphate</text>
        <dbReference type="Rhea" id="RHEA:34243"/>
        <dbReference type="ChEBI" id="CHEBI:15378"/>
        <dbReference type="ChEBI" id="CHEBI:33019"/>
        <dbReference type="ChEBI" id="CHEBI:37565"/>
        <dbReference type="ChEBI" id="CHEBI:71302"/>
        <dbReference type="ChEBI" id="CHEBI:71310"/>
        <dbReference type="EC" id="2.7.7.77"/>
    </reaction>
</comment>
<comment type="cofactor">
    <cofactor evidence="1">
        <name>Mg(2+)</name>
        <dbReference type="ChEBI" id="CHEBI:18420"/>
    </cofactor>
</comment>
<comment type="subunit">
    <text evidence="1">Monomer.</text>
</comment>
<comment type="subcellular location">
    <subcellularLocation>
        <location evidence="1">Cytoplasm</location>
    </subcellularLocation>
</comment>
<comment type="domain">
    <text evidence="1">The N-terminal domain determines nucleotide recognition and specific binding, while the C-terminal domain determines the specific binding to the target protein.</text>
</comment>
<comment type="similarity">
    <text evidence="1">Belongs to the MobA family.</text>
</comment>
<feature type="chain" id="PRO_1000019133" description="Molybdenum cofactor guanylyltransferase">
    <location>
        <begin position="1"/>
        <end position="201"/>
    </location>
</feature>
<feature type="binding site" evidence="1">
    <location>
        <begin position="15"/>
        <end position="17"/>
    </location>
    <ligand>
        <name>GTP</name>
        <dbReference type="ChEBI" id="CHEBI:37565"/>
    </ligand>
</feature>
<feature type="binding site" evidence="1">
    <location>
        <position position="28"/>
    </location>
    <ligand>
        <name>GTP</name>
        <dbReference type="ChEBI" id="CHEBI:37565"/>
    </ligand>
</feature>
<feature type="binding site" evidence="1">
    <location>
        <position position="74"/>
    </location>
    <ligand>
        <name>GTP</name>
        <dbReference type="ChEBI" id="CHEBI:37565"/>
    </ligand>
</feature>
<feature type="binding site" evidence="1">
    <location>
        <position position="104"/>
    </location>
    <ligand>
        <name>GTP</name>
        <dbReference type="ChEBI" id="CHEBI:37565"/>
    </ligand>
</feature>
<feature type="binding site" evidence="1">
    <location>
        <position position="104"/>
    </location>
    <ligand>
        <name>Mg(2+)</name>
        <dbReference type="ChEBI" id="CHEBI:18420"/>
    </ligand>
</feature>
<proteinExistence type="inferred from homology"/>